<keyword id="KW-0186">Copper</keyword>
<keyword id="KW-0249">Electron transport</keyword>
<keyword id="KW-0460">Magnesium</keyword>
<keyword id="KW-0472">Membrane</keyword>
<keyword id="KW-0479">Metal-binding</keyword>
<keyword id="KW-0496">Mitochondrion</keyword>
<keyword id="KW-0999">Mitochondrion inner membrane</keyword>
<keyword id="KW-1185">Reference proteome</keyword>
<keyword id="KW-0679">Respiratory chain</keyword>
<keyword id="KW-1278">Translocase</keyword>
<keyword id="KW-0812">Transmembrane</keyword>
<keyword id="KW-1133">Transmembrane helix</keyword>
<keyword id="KW-0813">Transport</keyword>
<gene>
    <name type="primary">MT-CO2</name>
    <name type="synonym">COII</name>
    <name type="synonym">COX2</name>
    <name type="synonym">COXII</name>
    <name type="synonym">MTCO2</name>
</gene>
<proteinExistence type="inferred from homology"/>
<organism>
    <name type="scientific">Mandrillus leucophaeus</name>
    <name type="common">Drill</name>
    <name type="synonym">Papio leucophaeus</name>
    <dbReference type="NCBI Taxonomy" id="9568"/>
    <lineage>
        <taxon>Eukaryota</taxon>
        <taxon>Metazoa</taxon>
        <taxon>Chordata</taxon>
        <taxon>Craniata</taxon>
        <taxon>Vertebrata</taxon>
        <taxon>Euteleostomi</taxon>
        <taxon>Mammalia</taxon>
        <taxon>Eutheria</taxon>
        <taxon>Euarchontoglires</taxon>
        <taxon>Primates</taxon>
        <taxon>Haplorrhini</taxon>
        <taxon>Catarrhini</taxon>
        <taxon>Cercopithecidae</taxon>
        <taxon>Cercopithecinae</taxon>
        <taxon>Mandrillus</taxon>
    </lineage>
</organism>
<comment type="function">
    <text evidence="2">Component of the cytochrome c oxidase, the last enzyme in the mitochondrial electron transport chain which drives oxidative phosphorylation. The respiratory chain contains 3 multisubunit complexes succinate dehydrogenase (complex II, CII), ubiquinol-cytochrome c oxidoreductase (cytochrome b-c1 complex, complex III, CIII) and cytochrome c oxidase (complex IV, CIV), that cooperate to transfer electrons derived from NADH and succinate to molecular oxygen, creating an electrochemical gradient over the inner membrane that drives transmembrane transport and the ATP synthase. Cytochrome c oxidase is the component of the respiratory chain that catalyzes the reduction of oxygen to water. Electrons originating from reduced cytochrome c in the intermembrane space (IMS) are transferred via the dinuclear copper A center (CU(A)) of subunit 2 and heme A of subunit 1 to the active site in subunit 1, a binuclear center (BNC) formed by heme A3 and copper B (CU(B)). The BNC reduces molecular oxygen to 2 water molecules using 4 electrons from cytochrome c in the IMS and 4 protons from the mitochondrial matrix.</text>
</comment>
<comment type="catalytic activity">
    <reaction evidence="2">
        <text>4 Fe(II)-[cytochrome c] + O2 + 8 H(+)(in) = 4 Fe(III)-[cytochrome c] + 2 H2O + 4 H(+)(out)</text>
        <dbReference type="Rhea" id="RHEA:11436"/>
        <dbReference type="Rhea" id="RHEA-COMP:10350"/>
        <dbReference type="Rhea" id="RHEA-COMP:14399"/>
        <dbReference type="ChEBI" id="CHEBI:15377"/>
        <dbReference type="ChEBI" id="CHEBI:15378"/>
        <dbReference type="ChEBI" id="CHEBI:15379"/>
        <dbReference type="ChEBI" id="CHEBI:29033"/>
        <dbReference type="ChEBI" id="CHEBI:29034"/>
        <dbReference type="EC" id="7.1.1.9"/>
    </reaction>
    <physiologicalReaction direction="left-to-right" evidence="2">
        <dbReference type="Rhea" id="RHEA:11437"/>
    </physiologicalReaction>
</comment>
<comment type="cofactor">
    <cofactor evidence="3">
        <name>Cu cation</name>
        <dbReference type="ChEBI" id="CHEBI:23378"/>
    </cofactor>
    <text evidence="3">Binds a dinuclear copper A center per subunit.</text>
</comment>
<comment type="subunit">
    <text evidence="1 3">Component of the cytochrome c oxidase (complex IV, CIV), a multisubunit enzyme composed of 14 subunits. The complex is composed of a catalytic core of 3 subunits MT-CO1, MT-CO2 and MT-CO3, encoded in the mitochondrial DNA, and 11 supernumerary subunits COX4I, COX5A, COX5B, COX6A, COX6B, COX6C, COX7A, COX7B, COX7C, COX8 and NDUFA4, which are encoded in the nuclear genome. The complex exists as a monomer or a dimer and forms supercomplexes (SCs) in the inner mitochondrial membrane with NADH-ubiquinone oxidoreductase (complex I, CI) and ubiquinol-cytochrome c oxidoreductase (cytochrome b-c1 complex, complex III, CIII), resulting in different assemblies (supercomplex SCI(1)III(2)IV(1) and megacomplex MCI(2)III(2)IV(2)) (By similarity). Found in a complex with TMEM177, COA6, COX18, COX20, SCO1 and SCO2. Interacts with TMEM177 in a COX20-dependent manner. Interacts with COX20. Interacts with COX16 (By similarity).</text>
</comment>
<comment type="subcellular location">
    <subcellularLocation>
        <location evidence="3">Mitochondrion inner membrane</location>
        <topology evidence="3">Multi-pass membrane protein</topology>
    </subcellularLocation>
</comment>
<comment type="similarity">
    <text evidence="4">Belongs to the cytochrome c oxidase subunit 2 family.</text>
</comment>
<reference key="1">
    <citation type="journal article" date="1992" name="Mol. Biol. Evol.">
        <title>Mitochondrial DNA phylogeny of the Old-World monkey tribe Papionini.</title>
        <authorList>
            <person name="Disotell T.R."/>
            <person name="Honeycutt R.L."/>
            <person name="Ruvolo M."/>
        </authorList>
    </citation>
    <scope>NUCLEOTIDE SEQUENCE [GENOMIC DNA]</scope>
</reference>
<geneLocation type="mitochondrion"/>
<sequence>MAHPAQLGLQDATSPVMEELITFHDHALMAMSLISLLVLYALFSTLTTKMTNTNITDAQEMETIWTILPAIILVLIAFPSLRILYMTDEVNNPSFTIKSIGHQWYWTYEYTDYGGLIFNSYMLPPLFLNPGDLRLLEVDNRVVLPIEAPVRMMITSQDVLHSWTIPTLGLKTDAVPGRLNQTVFTATRPGVYYGQCSEICGANHSFMPIVAELIPLKIFEMGPVFTL</sequence>
<evidence type="ECO:0000250" key="1">
    <source>
        <dbReference type="UniProtKB" id="P00403"/>
    </source>
</evidence>
<evidence type="ECO:0000250" key="2">
    <source>
        <dbReference type="UniProtKB" id="P00410"/>
    </source>
</evidence>
<evidence type="ECO:0000250" key="3">
    <source>
        <dbReference type="UniProtKB" id="P68530"/>
    </source>
</evidence>
<evidence type="ECO:0000305" key="4"/>
<name>COX2_MANLE</name>
<feature type="chain" id="PRO_0000183630" description="Cytochrome c oxidase subunit 2">
    <location>
        <begin position="1"/>
        <end position="227"/>
    </location>
</feature>
<feature type="topological domain" description="Mitochondrial intermembrane" evidence="3">
    <location>
        <begin position="1"/>
        <end position="14"/>
    </location>
</feature>
<feature type="transmembrane region" description="Helical; Name=I" evidence="3">
    <location>
        <begin position="15"/>
        <end position="45"/>
    </location>
</feature>
<feature type="topological domain" description="Mitochondrial matrix" evidence="3">
    <location>
        <begin position="46"/>
        <end position="59"/>
    </location>
</feature>
<feature type="transmembrane region" description="Helical; Name=II" evidence="3">
    <location>
        <begin position="60"/>
        <end position="87"/>
    </location>
</feature>
<feature type="topological domain" description="Mitochondrial intermembrane" evidence="3">
    <location>
        <begin position="88"/>
        <end position="227"/>
    </location>
</feature>
<feature type="binding site" evidence="3">
    <location>
        <position position="161"/>
    </location>
    <ligand>
        <name>Cu cation</name>
        <dbReference type="ChEBI" id="CHEBI:23378"/>
        <label>A1</label>
    </ligand>
</feature>
<feature type="binding site" evidence="3">
    <location>
        <position position="196"/>
    </location>
    <ligand>
        <name>Cu cation</name>
        <dbReference type="ChEBI" id="CHEBI:23378"/>
        <label>A1</label>
    </ligand>
</feature>
<feature type="binding site" evidence="3">
    <location>
        <position position="196"/>
    </location>
    <ligand>
        <name>Cu cation</name>
        <dbReference type="ChEBI" id="CHEBI:23378"/>
        <label>A2</label>
    </ligand>
</feature>
<feature type="binding site" evidence="3">
    <location>
        <position position="198"/>
    </location>
    <ligand>
        <name>Cu cation</name>
        <dbReference type="ChEBI" id="CHEBI:23378"/>
        <label>A2</label>
    </ligand>
</feature>
<feature type="binding site" evidence="3">
    <location>
        <position position="198"/>
    </location>
    <ligand>
        <name>Mg(2+)</name>
        <dbReference type="ChEBI" id="CHEBI:18420"/>
        <note>ligand shared with MT-CO1</note>
    </ligand>
</feature>
<feature type="binding site" evidence="3">
    <location>
        <position position="200"/>
    </location>
    <ligand>
        <name>Cu cation</name>
        <dbReference type="ChEBI" id="CHEBI:23378"/>
        <label>A1</label>
    </ligand>
</feature>
<feature type="binding site" evidence="3">
    <location>
        <position position="200"/>
    </location>
    <ligand>
        <name>Cu cation</name>
        <dbReference type="ChEBI" id="CHEBI:23378"/>
        <label>A2</label>
    </ligand>
</feature>
<feature type="binding site" evidence="3">
    <location>
        <position position="204"/>
    </location>
    <ligand>
        <name>Cu cation</name>
        <dbReference type="ChEBI" id="CHEBI:23378"/>
        <label>A2</label>
    </ligand>
</feature>
<feature type="binding site" evidence="3">
    <location>
        <position position="207"/>
    </location>
    <ligand>
        <name>Cu cation</name>
        <dbReference type="ChEBI" id="CHEBI:23378"/>
        <label>A1</label>
    </ligand>
</feature>
<protein>
    <recommendedName>
        <fullName>Cytochrome c oxidase subunit 2</fullName>
        <ecNumber>7.1.1.9</ecNumber>
    </recommendedName>
    <alternativeName>
        <fullName>Cytochrome c oxidase polypeptide II</fullName>
    </alternativeName>
</protein>
<dbReference type="EC" id="7.1.1.9"/>
<dbReference type="EMBL" id="M74006">
    <property type="protein sequence ID" value="AAA31897.1"/>
    <property type="molecule type" value="Genomic_DNA"/>
</dbReference>
<dbReference type="PIR" id="I61849">
    <property type="entry name" value="I61849"/>
</dbReference>
<dbReference type="RefSeq" id="YP_009180468.1">
    <property type="nucleotide sequence ID" value="NC_028442.1"/>
</dbReference>
<dbReference type="SMR" id="P98037"/>
<dbReference type="STRING" id="9568.ENSMLEP00000000004"/>
<dbReference type="Ensembl" id="ENSMLET00000000019.1">
    <property type="protein sequence ID" value="ENSMLEP00000000004.1"/>
    <property type="gene ID" value="ENSMLEG00000000019.1"/>
</dbReference>
<dbReference type="GeneID" id="26281540"/>
<dbReference type="CTD" id="4513"/>
<dbReference type="GeneTree" id="ENSGT00390000017410"/>
<dbReference type="OMA" id="WSYEYTD"/>
<dbReference type="Proteomes" id="UP000233140">
    <property type="component" value="Unassembled WGS sequence"/>
</dbReference>
<dbReference type="GO" id="GO:0005743">
    <property type="term" value="C:mitochondrial inner membrane"/>
    <property type="evidence" value="ECO:0007669"/>
    <property type="project" value="UniProtKB-SubCell"/>
</dbReference>
<dbReference type="GO" id="GO:0005739">
    <property type="term" value="C:mitochondrion"/>
    <property type="evidence" value="ECO:0000250"/>
    <property type="project" value="UniProtKB"/>
</dbReference>
<dbReference type="GO" id="GO:0045277">
    <property type="term" value="C:respiratory chain complex IV"/>
    <property type="evidence" value="ECO:0000250"/>
    <property type="project" value="UniProtKB"/>
</dbReference>
<dbReference type="GO" id="GO:0005507">
    <property type="term" value="F:copper ion binding"/>
    <property type="evidence" value="ECO:0007669"/>
    <property type="project" value="InterPro"/>
</dbReference>
<dbReference type="GO" id="GO:0004129">
    <property type="term" value="F:cytochrome-c oxidase activity"/>
    <property type="evidence" value="ECO:0007669"/>
    <property type="project" value="UniProtKB-EC"/>
</dbReference>
<dbReference type="GO" id="GO:0042773">
    <property type="term" value="P:ATP synthesis coupled electron transport"/>
    <property type="evidence" value="ECO:0007669"/>
    <property type="project" value="TreeGrafter"/>
</dbReference>
<dbReference type="CDD" id="cd13912">
    <property type="entry name" value="CcO_II_C"/>
    <property type="match status" value="1"/>
</dbReference>
<dbReference type="FunFam" id="1.10.287.90:FF:000001">
    <property type="entry name" value="Cytochrome c oxidase subunit 2"/>
    <property type="match status" value="1"/>
</dbReference>
<dbReference type="FunFam" id="2.60.40.420:FF:000001">
    <property type="entry name" value="Cytochrome c oxidase subunit 2"/>
    <property type="match status" value="1"/>
</dbReference>
<dbReference type="Gene3D" id="1.10.287.90">
    <property type="match status" value="1"/>
</dbReference>
<dbReference type="Gene3D" id="2.60.40.420">
    <property type="entry name" value="Cupredoxins - blue copper proteins"/>
    <property type="match status" value="1"/>
</dbReference>
<dbReference type="InterPro" id="IPR045187">
    <property type="entry name" value="CcO_II"/>
</dbReference>
<dbReference type="InterPro" id="IPR002429">
    <property type="entry name" value="CcO_II-like_C"/>
</dbReference>
<dbReference type="InterPro" id="IPR034210">
    <property type="entry name" value="CcO_II_C"/>
</dbReference>
<dbReference type="InterPro" id="IPR001505">
    <property type="entry name" value="Copper_CuA"/>
</dbReference>
<dbReference type="InterPro" id="IPR008972">
    <property type="entry name" value="Cupredoxin"/>
</dbReference>
<dbReference type="InterPro" id="IPR014222">
    <property type="entry name" value="Cyt_c_oxidase_su2"/>
</dbReference>
<dbReference type="InterPro" id="IPR011759">
    <property type="entry name" value="Cyt_c_oxidase_su2_TM_dom"/>
</dbReference>
<dbReference type="InterPro" id="IPR036257">
    <property type="entry name" value="Cyt_c_oxidase_su2_TM_sf"/>
</dbReference>
<dbReference type="NCBIfam" id="TIGR02866">
    <property type="entry name" value="CoxB"/>
    <property type="match status" value="1"/>
</dbReference>
<dbReference type="PANTHER" id="PTHR22888:SF9">
    <property type="entry name" value="CYTOCHROME C OXIDASE SUBUNIT 2"/>
    <property type="match status" value="1"/>
</dbReference>
<dbReference type="PANTHER" id="PTHR22888">
    <property type="entry name" value="CYTOCHROME C OXIDASE, SUBUNIT II"/>
    <property type="match status" value="1"/>
</dbReference>
<dbReference type="Pfam" id="PF00116">
    <property type="entry name" value="COX2"/>
    <property type="match status" value="1"/>
</dbReference>
<dbReference type="Pfam" id="PF02790">
    <property type="entry name" value="COX2_TM"/>
    <property type="match status" value="1"/>
</dbReference>
<dbReference type="PRINTS" id="PR01166">
    <property type="entry name" value="CYCOXIDASEII"/>
</dbReference>
<dbReference type="SUPFAM" id="SSF49503">
    <property type="entry name" value="Cupredoxins"/>
    <property type="match status" value="1"/>
</dbReference>
<dbReference type="SUPFAM" id="SSF81464">
    <property type="entry name" value="Cytochrome c oxidase subunit II-like, transmembrane region"/>
    <property type="match status" value="1"/>
</dbReference>
<dbReference type="PROSITE" id="PS00078">
    <property type="entry name" value="COX2"/>
    <property type="match status" value="1"/>
</dbReference>
<dbReference type="PROSITE" id="PS50857">
    <property type="entry name" value="COX2_CUA"/>
    <property type="match status" value="1"/>
</dbReference>
<dbReference type="PROSITE" id="PS50999">
    <property type="entry name" value="COX2_TM"/>
    <property type="match status" value="1"/>
</dbReference>
<accession>P98037</accession>